<keyword id="KW-0002">3D-structure</keyword>
<keyword id="KW-0143">Chaperone</keyword>
<keyword id="KW-0186">Copper</keyword>
<keyword id="KW-0963">Cytoplasm</keyword>
<keyword id="KW-1015">Disulfide bond</keyword>
<keyword id="KW-1017">Isopeptide bond</keyword>
<keyword id="KW-0479">Metal-binding</keyword>
<keyword id="KW-0597">Phosphoprotein</keyword>
<keyword id="KW-1267">Proteomics identification</keyword>
<keyword id="KW-1185">Reference proteome</keyword>
<keyword id="KW-0832">Ubl conjugation</keyword>
<keyword id="KW-0862">Zinc</keyword>
<protein>
    <recommendedName>
        <fullName evidence="10">Copper chaperone for superoxide dismutase</fullName>
    </recommendedName>
    <alternativeName>
        <fullName>Superoxide dismutase copper chaperone</fullName>
    </alternativeName>
</protein>
<sequence>MASDSGNQGTLCTLEFAVQMTCQSCVDAVRKSLQGVAGVQDVEVHLEDQMVLVHTTLPSQEVQALLEGTGRQAVLKGMGSGQLQNLGAAVAILGGPGTVQGVVRFLQLTPERCLIEGTIDGLEPGLHGLHVHQYGDLTNNCNSCGNHFNPDGASHGGPQDSDRHRGDLGNVRADADGRAIFRMEDEQLKVWDVIGRSLIIDEGEDDLGRGGHPLSKITGNSGERLACGIIARSAGLFQNPKQICSCDGLTIWEERGRPIAGKGRKESAQPPAHL</sequence>
<proteinExistence type="evidence at protein level"/>
<organism>
    <name type="scientific">Homo sapiens</name>
    <name type="common">Human</name>
    <dbReference type="NCBI Taxonomy" id="9606"/>
    <lineage>
        <taxon>Eukaryota</taxon>
        <taxon>Metazoa</taxon>
        <taxon>Chordata</taxon>
        <taxon>Craniata</taxon>
        <taxon>Vertebrata</taxon>
        <taxon>Euteleostomi</taxon>
        <taxon>Mammalia</taxon>
        <taxon>Eutheria</taxon>
        <taxon>Euarchontoglires</taxon>
        <taxon>Primates</taxon>
        <taxon>Haplorrhini</taxon>
        <taxon>Catarrhini</taxon>
        <taxon>Hominidae</taxon>
        <taxon>Homo</taxon>
    </lineage>
</organism>
<accession>O14618</accession>
<accession>Q2M366</accession>
<accession>Q8NEV0</accession>
<reference key="1">
    <citation type="journal article" date="1997" name="J. Biol. Chem.">
        <title>The copper chaperone for superoxide dismutase.</title>
        <authorList>
            <person name="Culotta V.C."/>
            <person name="Klomp L.W."/>
            <person name="Strain J."/>
            <person name="Casareno R.L.B."/>
            <person name="Krems B."/>
            <person name="Gitlin J.D."/>
        </authorList>
    </citation>
    <scope>NUCLEOTIDE SEQUENCE [MRNA]</scope>
</reference>
<reference key="2">
    <citation type="journal article" date="2011" name="BMC Syst. Biol.">
        <title>Initial characterization of the human central proteome.</title>
        <authorList>
            <person name="Burkard T.R."/>
            <person name="Planyavsky M."/>
            <person name="Kaupe I."/>
            <person name="Breitwieser F.P."/>
            <person name="Buerckstuemmer T."/>
            <person name="Bennett K.L."/>
            <person name="Superti-Furga G."/>
            <person name="Colinge J."/>
        </authorList>
    </citation>
    <scope>IDENTIFICATION BY MASS SPECTROMETRY [LARGE SCALE ANALYSIS]</scope>
</reference>
<reference key="3">
    <citation type="journal article" date="2014" name="J. Proteomics">
        <title>An enzyme assisted RP-RPLC approach for in-depth analysis of human liver phosphoproteome.</title>
        <authorList>
            <person name="Bian Y."/>
            <person name="Song C."/>
            <person name="Cheng K."/>
            <person name="Dong M."/>
            <person name="Wang F."/>
            <person name="Huang J."/>
            <person name="Sun D."/>
            <person name="Wang L."/>
            <person name="Ye M."/>
            <person name="Zou H."/>
        </authorList>
    </citation>
    <scope>PHOSPHORYLATION [LARGE SCALE ANALYSIS] AT SER-267</scope>
    <scope>IDENTIFICATION BY MASS SPECTROMETRY [LARGE SCALE ANALYSIS]</scope>
    <source>
        <tissue>Liver</tissue>
    </source>
</reference>
<reference key="4">
    <citation type="journal article" date="2019" name="BioMetals">
        <title>Copper-zinc superoxide dismutase (Sod1) activation terminates interaction between its copper chaperone (Ccs) and the cytosolic metal-binding domain of the copper importer Ctr1.</title>
        <authorList>
            <person name="Skopp A."/>
            <person name="Boyd S.D."/>
            <person name="Ullrich M.S."/>
            <person name="Liu L."/>
            <person name="Winkler D.D."/>
        </authorList>
    </citation>
    <scope>INTERACTION WITH SLC31A1</scope>
    <scope>SUBUNIT</scope>
</reference>
<reference key="5">
    <citation type="journal article" date="2013" name="ChemBioChem">
        <title>Mechanistic aspects of hSOD1 maturation from the solution structure of Cu(I) -loaded hCCS domain 1 and analysis of disulfide-free hSOD1 mutants.</title>
        <authorList>
            <person name="Banci L."/>
            <person name="Cantini F."/>
            <person name="Kozyreva T."/>
            <person name="Rubino J.T."/>
        </authorList>
    </citation>
    <scope>STRUCTURE BY NMR OF 1-85</scope>
    <scope>COPPER-BINDING SITES</scope>
    <scope>SUBUNIT</scope>
</reference>
<reference key="6">
    <citation type="submission" date="2002-05" db="EMBL/GenBank/DDBJ databases">
        <title>Human macrophage copper chaperone for superoxide dismutase (CCS), full length mRNA sequence.</title>
        <authorList>
            <person name="Bhat K.S."/>
        </authorList>
    </citation>
    <scope>NUCLEOTIDE SEQUENCE [MRNA]</scope>
</reference>
<reference key="7">
    <citation type="submission" date="2004-06" db="EMBL/GenBank/DDBJ databases">
        <title>Cloning of human full open reading frames in Gateway(TM) system entry vector (pDONR201).</title>
        <authorList>
            <person name="Halleck A."/>
            <person name="Ebert L."/>
            <person name="Mkoundinya M."/>
            <person name="Schick M."/>
            <person name="Eisenstein S."/>
            <person name="Neubert P."/>
            <person name="Kstrang K."/>
            <person name="Schatten R."/>
            <person name="Shen B."/>
            <person name="Henze S."/>
            <person name="Mar W."/>
            <person name="Korn B."/>
            <person name="Zuo D."/>
            <person name="Hu Y."/>
            <person name="LaBaer J."/>
        </authorList>
    </citation>
    <scope>NUCLEOTIDE SEQUENCE [LARGE SCALE MRNA]</scope>
</reference>
<reference key="8">
    <citation type="journal article" date="2004" name="Genome Res.">
        <title>The status, quality, and expansion of the NIH full-length cDNA project: the Mammalian Gene Collection (MGC).</title>
        <authorList>
            <consortium name="The MGC Project Team"/>
        </authorList>
    </citation>
    <scope>NUCLEOTIDE SEQUENCE [LARGE SCALE MRNA]</scope>
    <source>
        <tissue>Brain</tissue>
    </source>
</reference>
<reference key="9">
    <citation type="journal article" date="1998" name="J. Biol. Chem.">
        <title>The copper chaperone CCS directly interacts with copper/zinc superoxide dismutase.</title>
        <authorList>
            <person name="Casareno R.L.B."/>
            <person name="Waggoner D."/>
            <person name="Gitlin J.D."/>
        </authorList>
    </citation>
    <scope>SUBUNIT</scope>
    <scope>SUBCELLULAR LOCATION</scope>
</reference>
<reference key="10">
    <citation type="journal article" date="2005" name="Biochemistry">
        <title>Cysteine-to-serine mutants of the human copper chaperone for superoxide dismutase reveal a copper cluster at a domain III dimer interface.</title>
        <authorList>
            <person name="Stasser J.P."/>
            <person name="Eisses J.F."/>
            <person name="Barry A.N."/>
            <person name="Kaplan J.H."/>
            <person name="Blackburn N.J."/>
        </authorList>
    </citation>
    <scope>MUTAGENESIS OF CYS-22; CYS-25; CYS-244 AND CYS-246</scope>
    <scope>METAL-BINDING</scope>
</reference>
<reference key="11">
    <citation type="journal article" date="2010" name="J. Biol. Chem.">
        <title>Cu,Zn superoxide dismutase maturation and activity are regulated by COMMD1.</title>
        <authorList>
            <person name="Vonk W.I."/>
            <person name="Wijmenga C."/>
            <person name="Berger R."/>
            <person name="van de Sluis B."/>
            <person name="Klomp L.W."/>
        </authorList>
    </citation>
    <scope>INTERACTION WITH COMMD1</scope>
</reference>
<reference key="12">
    <citation type="journal article" date="2010" name="Mol. Cell. Biol.">
        <title>Regulation of the copper chaperone CCS by XIAP-mediated ubiquitination.</title>
        <authorList>
            <person name="Brady G.F."/>
            <person name="Galban S."/>
            <person name="Liu X."/>
            <person name="Basrur V."/>
            <person name="Gitlin J.D."/>
            <person name="Elenitoba-Johnson K.S."/>
            <person name="Wilson T.E."/>
            <person name="Duckett C.S."/>
        </authorList>
    </citation>
    <scope>UBIQUITINATION AT LYS-76; LYS-189; LYS-216 AND LYS-241 BY XIAP/BIRC4</scope>
    <scope>INTERACTION WITH XIAP/BIRC4</scope>
</reference>
<reference key="13">
    <citation type="journal article" date="2012" name="Hum. Mutat.">
        <title>Molecular and biochemical characterization of a unique mutation in CCS, the human copper chaperone to superoxide dismutase.</title>
        <authorList>
            <person name="Huppke P."/>
            <person name="Brendel C."/>
            <person name="Korenke G.C."/>
            <person name="Marquardt I."/>
            <person name="Donsante A."/>
            <person name="Yi L."/>
            <person name="Hicks J.D."/>
            <person name="Steinbach P.J."/>
            <person name="Wilson C."/>
            <person name="Elpeleg O."/>
            <person name="Moller L.B."/>
            <person name="Christodoulou J."/>
            <person name="Kaler S.G."/>
            <person name="Gartner J."/>
        </authorList>
    </citation>
    <scope>INTERACTION WITH SOD1</scope>
    <scope>VARIANT TRP-163</scope>
    <scope>CHARACTERIZATION OF VARIANT TRP-163</scope>
</reference>
<reference key="14">
    <citation type="journal article" date="2000" name="Biochemistry">
        <title>Crystal structure of the second domain of the human copper chaperone for superoxide dismutase.</title>
        <authorList>
            <person name="Lamb A.L."/>
            <person name="Wernimont A.K."/>
            <person name="Pufahl R.A."/>
            <person name="O'Halloran T.V."/>
            <person name="Rosenzweig A.C."/>
        </authorList>
    </citation>
    <scope>X-RAY CRYSTALLOGRAPHY (2.75 ANGSTROMS) OF 84-237 IN COMPLEX WITH ZINC</scope>
    <scope>SUBUNIT</scope>
    <scope>DISULFIDE BOND</scope>
</reference>
<reference key="15">
    <citation type="submission" date="2005-11" db="PDB data bank">
        <title>The apo form of HMA domain of copper chaperone for superoxide dismutase.</title>
        <authorList>
            <consortium name="RIKEN structural genomics initiative (RSGI)"/>
        </authorList>
    </citation>
    <scope>STRUCTURE BY NMR OF 1-87</scope>
</reference>
<gene>
    <name evidence="11" type="primary">CCS</name>
</gene>
<dbReference type="EMBL" id="AF002210">
    <property type="protein sequence ID" value="AAC51764.1"/>
    <property type="molecule type" value="mRNA"/>
</dbReference>
<dbReference type="EMBL" id="AY113179">
    <property type="protein sequence ID" value="AAM50090.1"/>
    <property type="molecule type" value="mRNA"/>
</dbReference>
<dbReference type="EMBL" id="CR541928">
    <property type="protein sequence ID" value="CAG46726.1"/>
    <property type="molecule type" value="mRNA"/>
</dbReference>
<dbReference type="EMBL" id="BC105016">
    <property type="protein sequence ID" value="AAI05017.1"/>
    <property type="molecule type" value="mRNA"/>
</dbReference>
<dbReference type="EMBL" id="BC112055">
    <property type="protein sequence ID" value="AAI12056.1"/>
    <property type="molecule type" value="mRNA"/>
</dbReference>
<dbReference type="CCDS" id="CCDS8146.1"/>
<dbReference type="RefSeq" id="NP_005116.1">
    <property type="nucleotide sequence ID" value="NM_005125.2"/>
</dbReference>
<dbReference type="PDB" id="1DO5">
    <property type="method" value="X-ray"/>
    <property type="resolution" value="2.75 A"/>
    <property type="chains" value="A/B/C/D=84-237"/>
</dbReference>
<dbReference type="PDB" id="2CRL">
    <property type="method" value="NMR"/>
    <property type="chains" value="A=1-85"/>
</dbReference>
<dbReference type="PDB" id="2RSQ">
    <property type="method" value="NMR"/>
    <property type="chains" value="A=1-85"/>
</dbReference>
<dbReference type="PDB" id="6FN8">
    <property type="method" value="X-ray"/>
    <property type="resolution" value="1.55 A"/>
    <property type="chains" value="A/B=85-236"/>
</dbReference>
<dbReference type="PDB" id="6FOL">
    <property type="method" value="X-ray"/>
    <property type="resolution" value="2.55 A"/>
    <property type="chains" value="A/D/E/H=85-232"/>
</dbReference>
<dbReference type="PDB" id="6FON">
    <property type="method" value="X-ray"/>
    <property type="resolution" value="3.05 A"/>
    <property type="chains" value="A/C=8-259"/>
</dbReference>
<dbReference type="PDB" id="6FP6">
    <property type="method" value="X-ray"/>
    <property type="resolution" value="3.00 A"/>
    <property type="chains" value="B/D/F/H/J/L/N/P/R/T/V/X=1-274"/>
</dbReference>
<dbReference type="PDBsum" id="1DO5"/>
<dbReference type="PDBsum" id="2CRL"/>
<dbReference type="PDBsum" id="2RSQ"/>
<dbReference type="PDBsum" id="6FN8"/>
<dbReference type="PDBsum" id="6FOL"/>
<dbReference type="PDBsum" id="6FON"/>
<dbReference type="PDBsum" id="6FP6"/>
<dbReference type="BMRB" id="O14618"/>
<dbReference type="SMR" id="O14618"/>
<dbReference type="BioGRID" id="115298">
    <property type="interactions" value="48"/>
</dbReference>
<dbReference type="FunCoup" id="O14618">
    <property type="interactions" value="1549"/>
</dbReference>
<dbReference type="IntAct" id="O14618">
    <property type="interactions" value="11"/>
</dbReference>
<dbReference type="MINT" id="O14618"/>
<dbReference type="STRING" id="9606.ENSP00000436318"/>
<dbReference type="DrugBank" id="DB09130">
    <property type="generic name" value="Copper"/>
</dbReference>
<dbReference type="DrugBank" id="DB01593">
    <property type="generic name" value="Zinc"/>
</dbReference>
<dbReference type="DrugBank" id="DB14487">
    <property type="generic name" value="Zinc acetate"/>
</dbReference>
<dbReference type="DrugBank" id="DB14533">
    <property type="generic name" value="Zinc chloride"/>
</dbReference>
<dbReference type="DrugBank" id="DB14548">
    <property type="generic name" value="Zinc sulfate, unspecified form"/>
</dbReference>
<dbReference type="GlyGen" id="O14618">
    <property type="glycosylation" value="1 site, 1 O-linked glycan (1 site)"/>
</dbReference>
<dbReference type="iPTMnet" id="O14618"/>
<dbReference type="PhosphoSitePlus" id="O14618"/>
<dbReference type="SwissPalm" id="O14618"/>
<dbReference type="BioMuta" id="CCS"/>
<dbReference type="OGP" id="O14618"/>
<dbReference type="jPOST" id="O14618"/>
<dbReference type="MassIVE" id="O14618"/>
<dbReference type="PaxDb" id="9606-ENSP00000436318"/>
<dbReference type="PeptideAtlas" id="O14618"/>
<dbReference type="ProteomicsDB" id="48122"/>
<dbReference type="Pumba" id="O14618"/>
<dbReference type="Antibodypedia" id="30210">
    <property type="antibodies" value="370 antibodies from 32 providers"/>
</dbReference>
<dbReference type="DNASU" id="9973"/>
<dbReference type="Ensembl" id="ENST00000533244.6">
    <property type="protein sequence ID" value="ENSP00000436318.1"/>
    <property type="gene ID" value="ENSG00000173992.9"/>
</dbReference>
<dbReference type="GeneID" id="9973"/>
<dbReference type="KEGG" id="hsa:9973"/>
<dbReference type="MANE-Select" id="ENST00000533244.6">
    <property type="protein sequence ID" value="ENSP00000436318.1"/>
    <property type="RefSeq nucleotide sequence ID" value="NM_005125.2"/>
    <property type="RefSeq protein sequence ID" value="NP_005116.1"/>
</dbReference>
<dbReference type="UCSC" id="uc001oir.4">
    <property type="organism name" value="human"/>
</dbReference>
<dbReference type="AGR" id="HGNC:1613"/>
<dbReference type="CTD" id="9973"/>
<dbReference type="DisGeNET" id="9973"/>
<dbReference type="GeneCards" id="CCS"/>
<dbReference type="HGNC" id="HGNC:1613">
    <property type="gene designation" value="CCS"/>
</dbReference>
<dbReference type="HPA" id="ENSG00000173992">
    <property type="expression patterns" value="Low tissue specificity"/>
</dbReference>
<dbReference type="MIM" id="603864">
    <property type="type" value="gene"/>
</dbReference>
<dbReference type="neXtProt" id="NX_O14618"/>
<dbReference type="OpenTargets" id="ENSG00000173992"/>
<dbReference type="PharmGKB" id="PA26177"/>
<dbReference type="VEuPathDB" id="HostDB:ENSG00000173992"/>
<dbReference type="eggNOG" id="KOG4656">
    <property type="taxonomic scope" value="Eukaryota"/>
</dbReference>
<dbReference type="GeneTree" id="ENSGT00940000159785"/>
<dbReference type="InParanoid" id="O14618"/>
<dbReference type="OMA" id="KNVWEER"/>
<dbReference type="OrthoDB" id="666972at2759"/>
<dbReference type="PAN-GO" id="O14618">
    <property type="GO annotations" value="2 GO annotations based on evolutionary models"/>
</dbReference>
<dbReference type="PhylomeDB" id="O14618"/>
<dbReference type="TreeFam" id="TF105184"/>
<dbReference type="PathwayCommons" id="O14618"/>
<dbReference type="Reactome" id="R-HSA-3299685">
    <property type="pathway name" value="Detoxification of Reactive Oxygen Species"/>
</dbReference>
<dbReference type="SignaLink" id="O14618"/>
<dbReference type="BioGRID-ORCS" id="9973">
    <property type="hits" value="76 hits in 1159 CRISPR screens"/>
</dbReference>
<dbReference type="EvolutionaryTrace" id="O14618"/>
<dbReference type="GeneWiki" id="CCS_(gene)"/>
<dbReference type="GenomeRNAi" id="9973"/>
<dbReference type="Pharos" id="O14618">
    <property type="development level" value="Tbio"/>
</dbReference>
<dbReference type="PRO" id="PR:O14618"/>
<dbReference type="Proteomes" id="UP000005640">
    <property type="component" value="Chromosome 11"/>
</dbReference>
<dbReference type="RNAct" id="O14618">
    <property type="molecule type" value="protein"/>
</dbReference>
<dbReference type="Bgee" id="ENSG00000173992">
    <property type="expression patterns" value="Expressed in right lobe of liver and 193 other cell types or tissues"/>
</dbReference>
<dbReference type="ExpressionAtlas" id="O14618">
    <property type="expression patterns" value="baseline and differential"/>
</dbReference>
<dbReference type="GO" id="GO:0005737">
    <property type="term" value="C:cytoplasm"/>
    <property type="evidence" value="ECO:0000314"/>
    <property type="project" value="UniProtKB"/>
</dbReference>
<dbReference type="GO" id="GO:0005829">
    <property type="term" value="C:cytosol"/>
    <property type="evidence" value="ECO:0000304"/>
    <property type="project" value="Reactome"/>
</dbReference>
<dbReference type="GO" id="GO:0005739">
    <property type="term" value="C:mitochondrion"/>
    <property type="evidence" value="ECO:0006056"/>
    <property type="project" value="FlyBase"/>
</dbReference>
<dbReference type="GO" id="GO:0005634">
    <property type="term" value="C:nucleus"/>
    <property type="evidence" value="ECO:0000314"/>
    <property type="project" value="UniProtKB"/>
</dbReference>
<dbReference type="GO" id="GO:0045296">
    <property type="term" value="F:cadherin binding"/>
    <property type="evidence" value="ECO:0007005"/>
    <property type="project" value="BHF-UCL"/>
</dbReference>
<dbReference type="GO" id="GO:0005507">
    <property type="term" value="F:copper ion binding"/>
    <property type="evidence" value="ECO:0000314"/>
    <property type="project" value="GO_Central"/>
</dbReference>
<dbReference type="GO" id="GO:0015035">
    <property type="term" value="F:protein-disulfide reductase activity"/>
    <property type="evidence" value="ECO:0000304"/>
    <property type="project" value="Reactome"/>
</dbReference>
<dbReference type="GO" id="GO:0016532">
    <property type="term" value="F:superoxide dismutase copper chaperone activity"/>
    <property type="evidence" value="ECO:0000318"/>
    <property type="project" value="GO_Central"/>
</dbReference>
<dbReference type="GO" id="GO:0034599">
    <property type="term" value="P:cellular response to oxidative stress"/>
    <property type="evidence" value="ECO:0000304"/>
    <property type="project" value="Reactome"/>
</dbReference>
<dbReference type="GO" id="GO:0051604">
    <property type="term" value="P:protein maturation"/>
    <property type="evidence" value="ECO:0000304"/>
    <property type="project" value="UniProtKB"/>
</dbReference>
<dbReference type="GO" id="GO:0019430">
    <property type="term" value="P:removal of superoxide radicals"/>
    <property type="evidence" value="ECO:0000318"/>
    <property type="project" value="GO_Central"/>
</dbReference>
<dbReference type="CDD" id="cd00305">
    <property type="entry name" value="Cu-Zn_Superoxide_Dismutase"/>
    <property type="match status" value="1"/>
</dbReference>
<dbReference type="CDD" id="cd00371">
    <property type="entry name" value="HMA"/>
    <property type="match status" value="1"/>
</dbReference>
<dbReference type="FunFam" id="2.60.40.200:FF:000004">
    <property type="entry name" value="Copper chaperone for superoxide dismutase"/>
    <property type="match status" value="1"/>
</dbReference>
<dbReference type="FunFam" id="3.30.70.100:FF:000027">
    <property type="entry name" value="Copper chaperone for superoxide dismutase"/>
    <property type="match status" value="1"/>
</dbReference>
<dbReference type="Gene3D" id="3.30.70.100">
    <property type="match status" value="1"/>
</dbReference>
<dbReference type="Gene3D" id="2.60.40.200">
    <property type="entry name" value="Superoxide dismutase, copper/zinc binding domain"/>
    <property type="match status" value="1"/>
</dbReference>
<dbReference type="InterPro" id="IPR006121">
    <property type="entry name" value="HMA_dom"/>
</dbReference>
<dbReference type="InterPro" id="IPR036163">
    <property type="entry name" value="HMA_dom_sf"/>
</dbReference>
<dbReference type="InterPro" id="IPR036423">
    <property type="entry name" value="SOD-like_Cu/Zn_dom_sf"/>
</dbReference>
<dbReference type="InterPro" id="IPR024134">
    <property type="entry name" value="SOD_Cu/Zn_/chaperone"/>
</dbReference>
<dbReference type="InterPro" id="IPR018152">
    <property type="entry name" value="SOD_Cu/Zn_BS"/>
</dbReference>
<dbReference type="InterPro" id="IPR001424">
    <property type="entry name" value="SOD_Cu_Zn_dom"/>
</dbReference>
<dbReference type="PANTHER" id="PTHR10003">
    <property type="entry name" value="SUPEROXIDE DISMUTASE CU-ZN -RELATED"/>
    <property type="match status" value="1"/>
</dbReference>
<dbReference type="Pfam" id="PF00403">
    <property type="entry name" value="HMA"/>
    <property type="match status" value="1"/>
</dbReference>
<dbReference type="Pfam" id="PF00080">
    <property type="entry name" value="Sod_Cu"/>
    <property type="match status" value="1"/>
</dbReference>
<dbReference type="PRINTS" id="PR00068">
    <property type="entry name" value="CUZNDISMTASE"/>
</dbReference>
<dbReference type="SUPFAM" id="SSF49329">
    <property type="entry name" value="Cu,Zn superoxide dismutase-like"/>
    <property type="match status" value="1"/>
</dbReference>
<dbReference type="SUPFAM" id="SSF55008">
    <property type="entry name" value="HMA, heavy metal-associated domain"/>
    <property type="match status" value="1"/>
</dbReference>
<dbReference type="PROSITE" id="PS50846">
    <property type="entry name" value="HMA_2"/>
    <property type="match status" value="1"/>
</dbReference>
<dbReference type="PROSITE" id="PS00332">
    <property type="entry name" value="SOD_CU_ZN_2"/>
    <property type="match status" value="1"/>
</dbReference>
<evidence type="ECO:0000255" key="1">
    <source>
        <dbReference type="PROSITE-ProRule" id="PRU00280"/>
    </source>
</evidence>
<evidence type="ECO:0000269" key="2">
    <source>
    </source>
</evidence>
<evidence type="ECO:0000269" key="3">
    <source>
    </source>
</evidence>
<evidence type="ECO:0000269" key="4">
    <source>
    </source>
</evidence>
<evidence type="ECO:0000269" key="5">
    <source>
    </source>
</evidence>
<evidence type="ECO:0000269" key="6">
    <source>
    </source>
</evidence>
<evidence type="ECO:0000269" key="7">
    <source>
    </source>
</evidence>
<evidence type="ECO:0000269" key="8">
    <source>
    </source>
</evidence>
<evidence type="ECO:0000269" key="9">
    <source>
    </source>
</evidence>
<evidence type="ECO:0000305" key="10"/>
<evidence type="ECO:0000312" key="11">
    <source>
        <dbReference type="HGNC" id="HGNC:1613"/>
    </source>
</evidence>
<evidence type="ECO:0007744" key="12">
    <source>
        <dbReference type="PDB" id="1DO5"/>
    </source>
</evidence>
<evidence type="ECO:0007744" key="13">
    <source>
        <dbReference type="PDB" id="2RSQ"/>
    </source>
</evidence>
<evidence type="ECO:0007744" key="14">
    <source>
    </source>
</evidence>
<evidence type="ECO:0007829" key="15">
    <source>
        <dbReference type="PDB" id="6FN8"/>
    </source>
</evidence>
<evidence type="ECO:0007829" key="16">
    <source>
        <dbReference type="PDB" id="6FOL"/>
    </source>
</evidence>
<evidence type="ECO:0007829" key="17">
    <source>
        <dbReference type="PDB" id="6FON"/>
    </source>
</evidence>
<evidence type="ECO:0007829" key="18">
    <source>
        <dbReference type="PDB" id="6FP6"/>
    </source>
</evidence>
<comment type="function">
    <text>Delivers copper to copper zinc superoxide dismutase (SOD1).</text>
</comment>
<comment type="cofactor">
    <cofactor evidence="13">
        <name>Cu(2+)</name>
        <dbReference type="ChEBI" id="CHEBI:29036"/>
    </cofactor>
    <text evidence="13">Binds 2 copper ions per subunit.</text>
</comment>
<comment type="cofactor">
    <cofactor evidence="2">
        <name>Zn(2+)</name>
        <dbReference type="ChEBI" id="CHEBI:29105"/>
    </cofactor>
    <text evidence="2">Binds 1 zinc ion per subunit.</text>
</comment>
<comment type="subunit">
    <text evidence="2 4 5 6 7 8 9">Homodimer, and heterodimer with SOD1 (PubMed:31292775). Interacts with COMMD1. Interacts with XIAP/BIRC4. Interacts with SLC31A1(via C-terminal domain); this interaction is Cu(1+)-mediated (PubMed:31292775). The heterodimer CCS:SOD1 interacts with SLC31A1; this heterotrimer is Cu(1+)-mediated and its maintenance is regulated through SOD1 activation (PubMed:31292775).</text>
</comment>
<comment type="interaction">
    <interactant intactId="EBI-11668690">
        <id>O14618</id>
    </interactant>
    <interactant intactId="EBI-724109">
        <id>Q9NWV4</id>
        <label>CZIB</label>
    </interactant>
    <organismsDiffer>false</organismsDiffer>
    <experiments>3</experiments>
</comment>
<comment type="interaction">
    <interactant intactId="EBI-11668690">
        <id>O14618</id>
    </interactant>
    <interactant intactId="EBI-990792">
        <id>P00441</id>
        <label>SOD1</label>
    </interactant>
    <organismsDiffer>false</organismsDiffer>
    <experiments>7</experiments>
</comment>
<comment type="interaction">
    <interactant intactId="EBI-11668690">
        <id>O14618</id>
    </interactant>
    <interactant intactId="EBI-517127">
        <id>P98170</id>
        <label>XIAP</label>
    </interactant>
    <organismsDiffer>false</organismsDiffer>
    <experiments>2</experiments>
</comment>
<comment type="subcellular location">
    <subcellularLocation>
        <location evidence="9">Cytoplasm</location>
    </subcellularLocation>
</comment>
<comment type="tissue specificity">
    <text>Ubiquitous.</text>
</comment>
<comment type="PTM">
    <text evidence="4">Ubiquitinion by XIAP/BIRC4 leads to enhancement of its chaperone activity toward its physiologic target, SOD1, rather than proteasomal degradation. XIAP/BIRC4 preferentially ubiquitinates at Lys-241.</text>
</comment>
<comment type="similarity">
    <text evidence="10">In the C-terminal section; belongs to the Cu-Zn superoxide dismutase family.</text>
</comment>
<feature type="chain" id="PRO_0000213543" description="Copper chaperone for superoxide dismutase">
    <location>
        <begin position="1"/>
        <end position="274"/>
    </location>
</feature>
<feature type="domain" description="HMA" evidence="1">
    <location>
        <begin position="11"/>
        <end position="74"/>
    </location>
</feature>
<feature type="region of interest" description="Superoxide dismutase-like">
    <location>
        <begin position="88"/>
        <end position="234"/>
    </location>
</feature>
<feature type="binding site" evidence="1 13">
    <location>
        <position position="22"/>
    </location>
    <ligand>
        <name>Cu cation</name>
        <dbReference type="ChEBI" id="CHEBI:23378"/>
        <label>1</label>
    </ligand>
</feature>
<feature type="binding site" evidence="1 13">
    <location>
        <position position="25"/>
    </location>
    <ligand>
        <name>Cu cation</name>
        <dbReference type="ChEBI" id="CHEBI:23378"/>
        <label>1</label>
    </ligand>
</feature>
<feature type="binding site" evidence="2 12">
    <location>
        <position position="147"/>
    </location>
    <ligand>
        <name>Zn(2+)</name>
        <dbReference type="ChEBI" id="CHEBI:29105"/>
    </ligand>
</feature>
<feature type="binding site" evidence="2 12">
    <location>
        <position position="155"/>
    </location>
    <ligand>
        <name>Zn(2+)</name>
        <dbReference type="ChEBI" id="CHEBI:29105"/>
    </ligand>
</feature>
<feature type="binding site" evidence="2 12">
    <location>
        <position position="164"/>
    </location>
    <ligand>
        <name>Zn(2+)</name>
        <dbReference type="ChEBI" id="CHEBI:29105"/>
    </ligand>
</feature>
<feature type="binding site" evidence="2 12">
    <location>
        <position position="167"/>
    </location>
    <ligand>
        <name>Zn(2+)</name>
        <dbReference type="ChEBI" id="CHEBI:29105"/>
    </ligand>
</feature>
<feature type="binding site">
    <location>
        <position position="244"/>
    </location>
    <ligand>
        <name>Cu cation</name>
        <dbReference type="ChEBI" id="CHEBI:23378"/>
        <label>2</label>
    </ligand>
</feature>
<feature type="binding site">
    <location>
        <position position="246"/>
    </location>
    <ligand>
        <name>Cu cation</name>
        <dbReference type="ChEBI" id="CHEBI:23378"/>
        <label>2</label>
    </ligand>
</feature>
<feature type="modified residue" description="Phosphoserine" evidence="14">
    <location>
        <position position="267"/>
    </location>
</feature>
<feature type="disulfide bond" evidence="2 12">
    <location>
        <begin position="141"/>
        <end position="227"/>
    </location>
</feature>
<feature type="cross-link" description="Glycyl lysine isopeptide (Lys-Gly) (interchain with G-Cter in ubiquitin)" evidence="4">
    <location>
        <position position="76"/>
    </location>
</feature>
<feature type="cross-link" description="Glycyl lysine isopeptide (Lys-Gly) (interchain with G-Cter in ubiquitin)" evidence="4">
    <location>
        <position position="189"/>
    </location>
</feature>
<feature type="cross-link" description="Glycyl lysine isopeptide (Lys-Gly) (interchain with G-Cter in ubiquitin)" evidence="4">
    <location>
        <position position="216"/>
    </location>
</feature>
<feature type="cross-link" description="Glycyl lysine isopeptide (Lys-Gly) (interchain with G-Cter in ubiquitin)" evidence="4">
    <location>
        <position position="241"/>
    </location>
</feature>
<feature type="sequence variant" id="VAR_068078" description="Found in a patient with congenital cataracts, hearing loss, neurodegeneration, neonatal hypotonia and hypoglycemia, pericardial effusion and neurodevelopmental regression after infection; the patient also carries a mutation in SLC33A1; mutant protein does not interact with SOD1; dbSNP:rs142340643." evidence="6">
    <original>R</original>
    <variation>W</variation>
    <location>
        <position position="163"/>
    </location>
</feature>
<feature type="mutagenesis site" description="Reduces copper binding by half; when associated with S-25. Negligible effect on zinc binding." evidence="3">
    <original>C</original>
    <variation>S</variation>
    <location>
        <position position="22"/>
    </location>
</feature>
<feature type="mutagenesis site" description="Reduces copper binding by half; when associated with S-22. Negligible effect on zinc binding." evidence="3">
    <original>C</original>
    <variation>S</variation>
    <location>
        <position position="25"/>
    </location>
</feature>
<feature type="mutagenesis site" description="Reduces copper binding by half; when associated with S-246. Negligible effect on zinc binding." evidence="3">
    <original>C</original>
    <variation>S</variation>
    <location>
        <position position="244"/>
    </location>
</feature>
<feature type="mutagenesis site" description="Reduces copper binding by half; when associated with S-244. Negligible effect on zinc binding." evidence="3">
    <original>C</original>
    <variation>S</variation>
    <location>
        <position position="246"/>
    </location>
</feature>
<feature type="sequence conflict" description="In Ref. 5; AAM50090." evidence="10" ref="5">
    <original>E</original>
    <variation>D</variation>
    <location>
        <position position="116"/>
    </location>
</feature>
<feature type="strand" evidence="18">
    <location>
        <begin position="12"/>
        <end position="18"/>
    </location>
</feature>
<feature type="helix" evidence="18">
    <location>
        <begin position="23"/>
        <end position="33"/>
    </location>
</feature>
<feature type="strand" evidence="18">
    <location>
        <begin position="39"/>
        <end position="45"/>
    </location>
</feature>
<feature type="turn" evidence="18">
    <location>
        <begin position="46"/>
        <end position="49"/>
    </location>
</feature>
<feature type="strand" evidence="18">
    <location>
        <begin position="50"/>
        <end position="57"/>
    </location>
</feature>
<feature type="helix" evidence="18">
    <location>
        <begin position="59"/>
        <end position="67"/>
    </location>
</feature>
<feature type="strand" evidence="18">
    <location>
        <begin position="69"/>
        <end position="71"/>
    </location>
</feature>
<feature type="strand" evidence="18">
    <location>
        <begin position="73"/>
        <end position="80"/>
    </location>
</feature>
<feature type="strand" evidence="15">
    <location>
        <begin position="88"/>
        <end position="94"/>
    </location>
</feature>
<feature type="strand" evidence="15">
    <location>
        <begin position="96"/>
        <end position="98"/>
    </location>
</feature>
<feature type="strand" evidence="15">
    <location>
        <begin position="100"/>
        <end position="109"/>
    </location>
</feature>
<feature type="strand" evidence="15">
    <location>
        <begin position="112"/>
        <end position="121"/>
    </location>
</feature>
<feature type="strand" evidence="15">
    <location>
        <begin position="124"/>
        <end position="133"/>
    </location>
</feature>
<feature type="helix" evidence="15">
    <location>
        <begin position="140"/>
        <end position="144"/>
    </location>
</feature>
<feature type="strand" evidence="16">
    <location>
        <begin position="160"/>
        <end position="163"/>
    </location>
</feature>
<feature type="strand" evidence="15">
    <location>
        <begin position="167"/>
        <end position="173"/>
    </location>
</feature>
<feature type="strand" evidence="15">
    <location>
        <begin position="179"/>
        <end position="187"/>
    </location>
</feature>
<feature type="helix" evidence="15">
    <location>
        <begin position="190"/>
        <end position="193"/>
    </location>
</feature>
<feature type="strand" evidence="15">
    <location>
        <begin position="196"/>
        <end position="203"/>
    </location>
</feature>
<feature type="turn" evidence="15">
    <location>
        <begin position="213"/>
        <end position="218"/>
    </location>
</feature>
<feature type="strand" evidence="15">
    <location>
        <begin position="223"/>
        <end position="233"/>
    </location>
</feature>
<feature type="strand" evidence="17">
    <location>
        <begin position="241"/>
        <end position="246"/>
    </location>
</feature>
<feature type="strand" evidence="17">
    <location>
        <begin position="249"/>
        <end position="253"/>
    </location>
</feature>
<name>CCS_HUMAN</name>